<name>HME1B_XENLA</name>
<proteinExistence type="evidence at transcript level"/>
<evidence type="ECO:0000250" key="1">
    <source>
        <dbReference type="UniProtKB" id="P09065"/>
    </source>
</evidence>
<evidence type="ECO:0000255" key="2">
    <source>
        <dbReference type="PROSITE-ProRule" id="PRU00108"/>
    </source>
</evidence>
<evidence type="ECO:0000256" key="3">
    <source>
        <dbReference type="SAM" id="MobiDB-lite"/>
    </source>
</evidence>
<evidence type="ECO:0000305" key="4"/>
<protein>
    <recommendedName>
        <fullName>Homeobox protein engrailed-1-B</fullName>
        <shortName>En-1B</shortName>
        <shortName>Homeobox protein en-1-B</shortName>
    </recommendedName>
</protein>
<keyword id="KW-0217">Developmental protein</keyword>
<keyword id="KW-0238">DNA-binding</keyword>
<keyword id="KW-0371">Homeobox</keyword>
<keyword id="KW-0539">Nucleus</keyword>
<keyword id="KW-1185">Reference proteome</keyword>
<dbReference type="EMBL" id="D14693">
    <property type="protein sequence ID" value="BAA03519.1"/>
    <property type="molecule type" value="mRNA"/>
</dbReference>
<dbReference type="EMBL" id="X59124">
    <property type="protein sequence ID" value="CAA41846.1"/>
    <property type="status" value="ALT_TERM"/>
    <property type="molecule type" value="Genomic_DNA"/>
</dbReference>
<dbReference type="PIR" id="S35638">
    <property type="entry name" value="S35638"/>
</dbReference>
<dbReference type="SMR" id="P31538"/>
<dbReference type="AGR" id="Xenbase:XB-GENE-5737240"/>
<dbReference type="Xenbase" id="XB-GENE-5737240">
    <property type="gene designation" value="en1.S"/>
</dbReference>
<dbReference type="Proteomes" id="UP000186698">
    <property type="component" value="Unplaced"/>
</dbReference>
<dbReference type="GO" id="GO:0005634">
    <property type="term" value="C:nucleus"/>
    <property type="evidence" value="ECO:0000318"/>
    <property type="project" value="GO_Central"/>
</dbReference>
<dbReference type="GO" id="GO:0000981">
    <property type="term" value="F:DNA-binding transcription factor activity, RNA polymerase II-specific"/>
    <property type="evidence" value="ECO:0000318"/>
    <property type="project" value="GO_Central"/>
</dbReference>
<dbReference type="GO" id="GO:0000978">
    <property type="term" value="F:RNA polymerase II cis-regulatory region sequence-specific DNA binding"/>
    <property type="evidence" value="ECO:0000318"/>
    <property type="project" value="GO_Central"/>
</dbReference>
<dbReference type="GO" id="GO:0030182">
    <property type="term" value="P:neuron differentiation"/>
    <property type="evidence" value="ECO:0007669"/>
    <property type="project" value="TreeGrafter"/>
</dbReference>
<dbReference type="GO" id="GO:0006357">
    <property type="term" value="P:regulation of transcription by RNA polymerase II"/>
    <property type="evidence" value="ECO:0000318"/>
    <property type="project" value="GO_Central"/>
</dbReference>
<dbReference type="CDD" id="cd00086">
    <property type="entry name" value="homeodomain"/>
    <property type="match status" value="1"/>
</dbReference>
<dbReference type="FunFam" id="1.10.10.60:FF:000167">
    <property type="entry name" value="Homeobox protein engrailed-like"/>
    <property type="match status" value="1"/>
</dbReference>
<dbReference type="Gene3D" id="1.10.10.60">
    <property type="entry name" value="Homeodomain-like"/>
    <property type="match status" value="1"/>
</dbReference>
<dbReference type="InterPro" id="IPR050720">
    <property type="entry name" value="Engrailed_Homeobox_TFs"/>
</dbReference>
<dbReference type="InterPro" id="IPR001356">
    <property type="entry name" value="HD"/>
</dbReference>
<dbReference type="InterPro" id="IPR000747">
    <property type="entry name" value="HD_engrailed"/>
</dbReference>
<dbReference type="InterPro" id="IPR020479">
    <property type="entry name" value="HD_metazoa"/>
</dbReference>
<dbReference type="InterPro" id="IPR019549">
    <property type="entry name" value="Homeobox-engrailed_C-terminal"/>
</dbReference>
<dbReference type="InterPro" id="IPR019737">
    <property type="entry name" value="Homeobox-engrailed_CS"/>
</dbReference>
<dbReference type="InterPro" id="IPR017970">
    <property type="entry name" value="Homeobox_CS"/>
</dbReference>
<dbReference type="InterPro" id="IPR009057">
    <property type="entry name" value="Homeodomain-like_sf"/>
</dbReference>
<dbReference type="PANTHER" id="PTHR24341">
    <property type="entry name" value="HOMEOBOX PROTEIN ENGRAILED"/>
    <property type="match status" value="1"/>
</dbReference>
<dbReference type="PANTHER" id="PTHR24341:SF4">
    <property type="entry name" value="HOMEOBOX PROTEIN ENGRAILED-1"/>
    <property type="match status" value="1"/>
</dbReference>
<dbReference type="Pfam" id="PF10525">
    <property type="entry name" value="Engrail_1_C_sig"/>
    <property type="match status" value="1"/>
</dbReference>
<dbReference type="Pfam" id="PF00046">
    <property type="entry name" value="Homeodomain"/>
    <property type="match status" value="1"/>
</dbReference>
<dbReference type="PRINTS" id="PR00026">
    <property type="entry name" value="ENGRAILED"/>
</dbReference>
<dbReference type="PRINTS" id="PR00024">
    <property type="entry name" value="HOMEOBOX"/>
</dbReference>
<dbReference type="SMART" id="SM00389">
    <property type="entry name" value="HOX"/>
    <property type="match status" value="1"/>
</dbReference>
<dbReference type="SUPFAM" id="SSF46689">
    <property type="entry name" value="Homeodomain-like"/>
    <property type="match status" value="1"/>
</dbReference>
<dbReference type="PROSITE" id="PS00033">
    <property type="entry name" value="ENGRAILED"/>
    <property type="match status" value="1"/>
</dbReference>
<dbReference type="PROSITE" id="PS00027">
    <property type="entry name" value="HOMEOBOX_1"/>
    <property type="match status" value="1"/>
</dbReference>
<dbReference type="PROSITE" id="PS50071">
    <property type="entry name" value="HOMEOBOX_2"/>
    <property type="match status" value="1"/>
</dbReference>
<organism>
    <name type="scientific">Xenopus laevis</name>
    <name type="common">African clawed frog</name>
    <dbReference type="NCBI Taxonomy" id="8355"/>
    <lineage>
        <taxon>Eukaryota</taxon>
        <taxon>Metazoa</taxon>
        <taxon>Chordata</taxon>
        <taxon>Craniata</taxon>
        <taxon>Vertebrata</taxon>
        <taxon>Euteleostomi</taxon>
        <taxon>Amphibia</taxon>
        <taxon>Batrachia</taxon>
        <taxon>Anura</taxon>
        <taxon>Pipoidea</taxon>
        <taxon>Pipidae</taxon>
        <taxon>Xenopodinae</taxon>
        <taxon>Xenopus</taxon>
        <taxon>Xenopus</taxon>
    </lineage>
</organism>
<reference key="1">
    <citation type="journal article" date="1993" name="Nucleic Acids Res.">
        <title>Nucleotide sequence of Xenopus homeobox gene, En-1.</title>
        <authorList>
            <person name="Watanabe M."/>
            <person name="Hayashida T."/>
            <person name="Nishimoto T."/>
            <person name="Kobayashi H."/>
        </authorList>
    </citation>
    <scope>NUCLEOTIDE SEQUENCE [MRNA]</scope>
</reference>
<reference key="2">
    <citation type="journal article" date="1990" name="FEBS Lett.">
        <title>Conservation of engrailed-like homeobox sequences during vertebrate evolution.</title>
        <authorList>
            <person name="Holland P.W.H."/>
            <person name="Williams N.A."/>
        </authorList>
    </citation>
    <scope>NUCLEOTIDE SEQUENCE [GENOMIC DNA] OF 91-150</scope>
</reference>
<feature type="chain" id="PRO_0000196066" description="Homeobox protein engrailed-1-B">
    <location>
        <begin position="1" status="less than"/>
        <end position="171"/>
    </location>
</feature>
<feature type="DNA-binding region" description="Homeobox" evidence="2">
    <location>
        <begin position="82"/>
        <end position="141"/>
    </location>
</feature>
<feature type="region of interest" description="Disordered" evidence="3">
    <location>
        <begin position="1"/>
        <end position="41"/>
    </location>
</feature>
<feature type="region of interest" description="Disordered" evidence="3">
    <location>
        <begin position="60"/>
        <end position="86"/>
    </location>
</feature>
<feature type="compositionally biased region" description="Low complexity" evidence="3">
    <location>
        <begin position="15"/>
        <end position="29"/>
    </location>
</feature>
<feature type="non-terminal residue">
    <location>
        <position position="1"/>
    </location>
</feature>
<gene>
    <name type="primary">en1-b</name>
    <name type="synonym">en1b</name>
</gene>
<accession>P31538</accession>
<sequence length="171" mass="19151">EDPGTMGPGNPAPSPDSDTPSDSSKGSDSNPALLLVGNAAPPVHKKDSVVWPAWVYCTRYSDRPSSGPRTRKLKKKKSEKEDKRPRTAFTAEQLQRLKAEFQANRYITEQRRQTLAQELSLNESQIKIWFQNKRAKIKKASGMKNGLALHLMAQGLYNHSTTTVQEKEESE</sequence>
<comment type="function">
    <text evidence="1">Required for proper formation of the apical ectodermal ridge and correct dorsal-ventral patterning in the limb.</text>
</comment>
<comment type="subcellular location">
    <subcellularLocation>
        <location evidence="2">Nucleus</location>
    </subcellularLocation>
</comment>
<comment type="similarity">
    <text evidence="4">Belongs to the engrailed homeobox family.</text>
</comment>